<evidence type="ECO:0000305" key="1"/>
<sequence>MEQFDFDSIFNNAVGNMKYFIKKVKKYEEIKKHEDILKKDLLNAVNVFIERFRNNPCICKNRNNHSSCTTNACGEIENRMKNWVEKLFEYSDDEEKLNEFFKIIAKDAMKFVELDFEPLYILCGLEEIRETAEEKLKEELPTEEYLKVMEEFDDLIERMSLVATAVYMEFEDRVFERMGINKNLKYNIIKLGLKKMNIN</sequence>
<comment type="similarity">
    <text evidence="1">To M.jannaschii MJ1356.</text>
</comment>
<name>Y1461_METJA</name>
<dbReference type="EMBL" id="L77117">
    <property type="protein sequence ID" value="AAB99475.1"/>
    <property type="molecule type" value="Genomic_DNA"/>
</dbReference>
<dbReference type="PIR" id="D64482">
    <property type="entry name" value="D64482"/>
</dbReference>
<dbReference type="RefSeq" id="WP_010870981.1">
    <property type="nucleotide sequence ID" value="NC_000909.1"/>
</dbReference>
<dbReference type="SMR" id="Q58856"/>
<dbReference type="STRING" id="243232.MJ_1461"/>
<dbReference type="PaxDb" id="243232-MJ_1461"/>
<dbReference type="EnsemblBacteria" id="AAB99475">
    <property type="protein sequence ID" value="AAB99475"/>
    <property type="gene ID" value="MJ_1461"/>
</dbReference>
<dbReference type="GeneID" id="1452365"/>
<dbReference type="KEGG" id="mja:MJ_1461"/>
<dbReference type="eggNOG" id="arCOG09681">
    <property type="taxonomic scope" value="Archaea"/>
</dbReference>
<dbReference type="HOGENOM" id="CLU_1369557_0_0_2"/>
<dbReference type="InParanoid" id="Q58856"/>
<dbReference type="OrthoDB" id="65964at2157"/>
<dbReference type="Proteomes" id="UP000000805">
    <property type="component" value="Chromosome"/>
</dbReference>
<keyword id="KW-1185">Reference proteome</keyword>
<accession>Q58856</accession>
<proteinExistence type="predicted"/>
<reference key="1">
    <citation type="journal article" date="1996" name="Science">
        <title>Complete genome sequence of the methanogenic archaeon, Methanococcus jannaschii.</title>
        <authorList>
            <person name="Bult C.J."/>
            <person name="White O."/>
            <person name="Olsen G.J."/>
            <person name="Zhou L."/>
            <person name="Fleischmann R.D."/>
            <person name="Sutton G.G."/>
            <person name="Blake J.A."/>
            <person name="FitzGerald L.M."/>
            <person name="Clayton R.A."/>
            <person name="Gocayne J.D."/>
            <person name="Kerlavage A.R."/>
            <person name="Dougherty B.A."/>
            <person name="Tomb J.-F."/>
            <person name="Adams M.D."/>
            <person name="Reich C.I."/>
            <person name="Overbeek R."/>
            <person name="Kirkness E.F."/>
            <person name="Weinstock K.G."/>
            <person name="Merrick J.M."/>
            <person name="Glodek A."/>
            <person name="Scott J.L."/>
            <person name="Geoghagen N.S.M."/>
            <person name="Weidman J.F."/>
            <person name="Fuhrmann J.L."/>
            <person name="Nguyen D."/>
            <person name="Utterback T.R."/>
            <person name="Kelley J.M."/>
            <person name="Peterson J.D."/>
            <person name="Sadow P.W."/>
            <person name="Hanna M.C."/>
            <person name="Cotton M.D."/>
            <person name="Roberts K.M."/>
            <person name="Hurst M.A."/>
            <person name="Kaine B.P."/>
            <person name="Borodovsky M."/>
            <person name="Klenk H.-P."/>
            <person name="Fraser C.M."/>
            <person name="Smith H.O."/>
            <person name="Woese C.R."/>
            <person name="Venter J.C."/>
        </authorList>
    </citation>
    <scope>NUCLEOTIDE SEQUENCE [LARGE SCALE GENOMIC DNA]</scope>
    <source>
        <strain>ATCC 43067 / DSM 2661 / JAL-1 / JCM 10045 / NBRC 100440</strain>
    </source>
</reference>
<protein>
    <recommendedName>
        <fullName>Uncharacterized protein MJ1461</fullName>
    </recommendedName>
</protein>
<organism>
    <name type="scientific">Methanocaldococcus jannaschii (strain ATCC 43067 / DSM 2661 / JAL-1 / JCM 10045 / NBRC 100440)</name>
    <name type="common">Methanococcus jannaschii</name>
    <dbReference type="NCBI Taxonomy" id="243232"/>
    <lineage>
        <taxon>Archaea</taxon>
        <taxon>Methanobacteriati</taxon>
        <taxon>Methanobacteriota</taxon>
        <taxon>Methanomada group</taxon>
        <taxon>Methanococci</taxon>
        <taxon>Methanococcales</taxon>
        <taxon>Methanocaldococcaceae</taxon>
        <taxon>Methanocaldococcus</taxon>
    </lineage>
</organism>
<gene>
    <name type="ordered locus">MJ1461</name>
</gene>
<feature type="chain" id="PRO_0000107350" description="Uncharacterized protein MJ1461">
    <location>
        <begin position="1"/>
        <end position="199"/>
    </location>
</feature>